<name>GSA1_BACMK</name>
<proteinExistence type="inferred from homology"/>
<dbReference type="EC" id="5.4.3.8" evidence="1"/>
<dbReference type="EMBL" id="CP000903">
    <property type="protein sequence ID" value="ABY41713.1"/>
    <property type="molecule type" value="Genomic_DNA"/>
</dbReference>
<dbReference type="SMR" id="A9VSS7"/>
<dbReference type="KEGG" id="bwe:BcerKBAB4_0447"/>
<dbReference type="eggNOG" id="COG0001">
    <property type="taxonomic scope" value="Bacteria"/>
</dbReference>
<dbReference type="HOGENOM" id="CLU_016922_1_5_9"/>
<dbReference type="UniPathway" id="UPA00251">
    <property type="reaction ID" value="UER00317"/>
</dbReference>
<dbReference type="Proteomes" id="UP000002154">
    <property type="component" value="Chromosome"/>
</dbReference>
<dbReference type="GO" id="GO:0005737">
    <property type="term" value="C:cytoplasm"/>
    <property type="evidence" value="ECO:0007669"/>
    <property type="project" value="UniProtKB-SubCell"/>
</dbReference>
<dbReference type="GO" id="GO:0042286">
    <property type="term" value="F:glutamate-1-semialdehyde 2,1-aminomutase activity"/>
    <property type="evidence" value="ECO:0007669"/>
    <property type="project" value="UniProtKB-UniRule"/>
</dbReference>
<dbReference type="GO" id="GO:0030170">
    <property type="term" value="F:pyridoxal phosphate binding"/>
    <property type="evidence" value="ECO:0007669"/>
    <property type="project" value="InterPro"/>
</dbReference>
<dbReference type="GO" id="GO:0008483">
    <property type="term" value="F:transaminase activity"/>
    <property type="evidence" value="ECO:0007669"/>
    <property type="project" value="InterPro"/>
</dbReference>
<dbReference type="GO" id="GO:0006782">
    <property type="term" value="P:protoporphyrinogen IX biosynthetic process"/>
    <property type="evidence" value="ECO:0007669"/>
    <property type="project" value="UniProtKB-UniRule"/>
</dbReference>
<dbReference type="CDD" id="cd00610">
    <property type="entry name" value="OAT_like"/>
    <property type="match status" value="1"/>
</dbReference>
<dbReference type="FunFam" id="3.40.640.10:FF:000021">
    <property type="entry name" value="Glutamate-1-semialdehyde 2,1-aminomutase"/>
    <property type="match status" value="1"/>
</dbReference>
<dbReference type="Gene3D" id="3.90.1150.10">
    <property type="entry name" value="Aspartate Aminotransferase, domain 1"/>
    <property type="match status" value="1"/>
</dbReference>
<dbReference type="Gene3D" id="3.40.640.10">
    <property type="entry name" value="Type I PLP-dependent aspartate aminotransferase-like (Major domain)"/>
    <property type="match status" value="1"/>
</dbReference>
<dbReference type="HAMAP" id="MF_00375">
    <property type="entry name" value="HemL_aminotrans_3"/>
    <property type="match status" value="1"/>
</dbReference>
<dbReference type="InterPro" id="IPR004639">
    <property type="entry name" value="4pyrrol_synth_GluAld_NH2Trfase"/>
</dbReference>
<dbReference type="InterPro" id="IPR005814">
    <property type="entry name" value="Aminotrans_3"/>
</dbReference>
<dbReference type="InterPro" id="IPR049704">
    <property type="entry name" value="Aminotrans_3_PPA_site"/>
</dbReference>
<dbReference type="InterPro" id="IPR015424">
    <property type="entry name" value="PyrdxlP-dep_Trfase"/>
</dbReference>
<dbReference type="InterPro" id="IPR015421">
    <property type="entry name" value="PyrdxlP-dep_Trfase_major"/>
</dbReference>
<dbReference type="InterPro" id="IPR015422">
    <property type="entry name" value="PyrdxlP-dep_Trfase_small"/>
</dbReference>
<dbReference type="NCBIfam" id="TIGR00713">
    <property type="entry name" value="hemL"/>
    <property type="match status" value="1"/>
</dbReference>
<dbReference type="NCBIfam" id="NF000818">
    <property type="entry name" value="PRK00062.1"/>
    <property type="match status" value="1"/>
</dbReference>
<dbReference type="NCBIfam" id="NF009055">
    <property type="entry name" value="PRK12389.1"/>
    <property type="match status" value="1"/>
</dbReference>
<dbReference type="PANTHER" id="PTHR43713">
    <property type="entry name" value="GLUTAMATE-1-SEMIALDEHYDE 2,1-AMINOMUTASE"/>
    <property type="match status" value="1"/>
</dbReference>
<dbReference type="PANTHER" id="PTHR43713:SF1">
    <property type="entry name" value="GLUTAMATE-1-SEMIALDEHYDE 2,1-AMINOMUTASE 2"/>
    <property type="match status" value="1"/>
</dbReference>
<dbReference type="Pfam" id="PF00202">
    <property type="entry name" value="Aminotran_3"/>
    <property type="match status" value="1"/>
</dbReference>
<dbReference type="SUPFAM" id="SSF53383">
    <property type="entry name" value="PLP-dependent transferases"/>
    <property type="match status" value="1"/>
</dbReference>
<dbReference type="PROSITE" id="PS00600">
    <property type="entry name" value="AA_TRANSFER_CLASS_3"/>
    <property type="match status" value="1"/>
</dbReference>
<organism>
    <name type="scientific">Bacillus mycoides (strain KBAB4)</name>
    <name type="common">Bacillus weihenstephanensis</name>
    <dbReference type="NCBI Taxonomy" id="315730"/>
    <lineage>
        <taxon>Bacteria</taxon>
        <taxon>Bacillati</taxon>
        <taxon>Bacillota</taxon>
        <taxon>Bacilli</taxon>
        <taxon>Bacillales</taxon>
        <taxon>Bacillaceae</taxon>
        <taxon>Bacillus</taxon>
        <taxon>Bacillus cereus group</taxon>
    </lineage>
</organism>
<protein>
    <recommendedName>
        <fullName evidence="1">Glutamate-1-semialdehyde 2,1-aminomutase 1</fullName>
        <shortName evidence="1">GSA 1</shortName>
        <ecNumber evidence="1">5.4.3.8</ecNumber>
    </recommendedName>
    <alternativeName>
        <fullName evidence="1">Glutamate-1-semialdehyde aminotransferase 1</fullName>
        <shortName evidence="1">GSA-AT 1</shortName>
    </alternativeName>
</protein>
<reference key="1">
    <citation type="journal article" date="2008" name="Chem. Biol. Interact.">
        <title>Extending the Bacillus cereus group genomics to putative food-borne pathogens of different toxicity.</title>
        <authorList>
            <person name="Lapidus A."/>
            <person name="Goltsman E."/>
            <person name="Auger S."/>
            <person name="Galleron N."/>
            <person name="Segurens B."/>
            <person name="Dossat C."/>
            <person name="Land M.L."/>
            <person name="Broussolle V."/>
            <person name="Brillard J."/>
            <person name="Guinebretiere M.-H."/>
            <person name="Sanchis V."/>
            <person name="Nguen-the C."/>
            <person name="Lereclus D."/>
            <person name="Richardson P."/>
            <person name="Wincker P."/>
            <person name="Weissenbach J."/>
            <person name="Ehrlich S.D."/>
            <person name="Sorokin A."/>
        </authorList>
    </citation>
    <scope>NUCLEOTIDE SEQUENCE [LARGE SCALE GENOMIC DNA]</scope>
    <source>
        <strain>KBAB4</strain>
    </source>
</reference>
<feature type="chain" id="PRO_0000382281" description="Glutamate-1-semialdehyde 2,1-aminomutase 1">
    <location>
        <begin position="1"/>
        <end position="432"/>
    </location>
</feature>
<feature type="modified residue" description="N6-(pyridoxal phosphate)lysine" evidence="1">
    <location>
        <position position="268"/>
    </location>
</feature>
<sequence>MNFTKSEALHKEALEHIVGGVNSPSRSFKAVGGGSPVAMERGKGAYFWDVDGNKYIDYLAAYGPIITGHAHPHITKAITTAAENGVLYGTPTALEVKFAKMLKEAMPALDKVRFVNSGTESVMTTIRVARAYTGRTKIMKFAGCYHGHSDLVLVAAGSGPSTLGTPDSAGVPQSIAQEVITVPFNNVETLKEALDKWGHEVAAILVEPIVGNFGIVEPKPGFLEKVNELVHEAGALVIYDEVITAFRFMYGGAQDLLGVTPDLTALGKVIGGGLPIGAYGGKKEIMEQVAPLGPAYQAGTMAGNPASMASGIACLEVLQQKGVYEKLDELGAMLEKGILEQATKHNIDITVNRLKGALTVYFTTNTIEDYDAAKNTDGEMFGRFFKLMLQEGINLAPSKYEAWFLTTEHTKEDIEYTIEAVGRAFAALADNK</sequence>
<gene>
    <name evidence="1" type="primary">hemL1</name>
    <name type="ordered locus">BcerKBAB4_0447</name>
</gene>
<accession>A9VSS7</accession>
<comment type="catalytic activity">
    <reaction evidence="1">
        <text>(S)-4-amino-5-oxopentanoate = 5-aminolevulinate</text>
        <dbReference type="Rhea" id="RHEA:14265"/>
        <dbReference type="ChEBI" id="CHEBI:57501"/>
        <dbReference type="ChEBI" id="CHEBI:356416"/>
        <dbReference type="EC" id="5.4.3.8"/>
    </reaction>
</comment>
<comment type="cofactor">
    <cofactor evidence="1">
        <name>pyridoxal 5'-phosphate</name>
        <dbReference type="ChEBI" id="CHEBI:597326"/>
    </cofactor>
</comment>
<comment type="pathway">
    <text evidence="1">Porphyrin-containing compound metabolism; protoporphyrin-IX biosynthesis; 5-aminolevulinate from L-glutamyl-tRNA(Glu): step 2/2.</text>
</comment>
<comment type="subunit">
    <text evidence="1">Homodimer.</text>
</comment>
<comment type="subcellular location">
    <subcellularLocation>
        <location evidence="1">Cytoplasm</location>
    </subcellularLocation>
</comment>
<comment type="similarity">
    <text evidence="1">Belongs to the class-III pyridoxal-phosphate-dependent aminotransferase family. HemL subfamily.</text>
</comment>
<evidence type="ECO:0000255" key="1">
    <source>
        <dbReference type="HAMAP-Rule" id="MF_00375"/>
    </source>
</evidence>
<keyword id="KW-0963">Cytoplasm</keyword>
<keyword id="KW-0413">Isomerase</keyword>
<keyword id="KW-0627">Porphyrin biosynthesis</keyword>
<keyword id="KW-0663">Pyridoxal phosphate</keyword>